<keyword id="KW-0150">Chloroplast</keyword>
<keyword id="KW-0472">Membrane</keyword>
<keyword id="KW-0602">Photosynthesis</keyword>
<keyword id="KW-0604">Photosystem II</keyword>
<keyword id="KW-0934">Plastid</keyword>
<keyword id="KW-0674">Reaction center</keyword>
<keyword id="KW-0793">Thylakoid</keyword>
<keyword id="KW-0812">Transmembrane</keyword>
<keyword id="KW-1133">Transmembrane helix</keyword>
<name>PSBJ_LEPVR</name>
<comment type="function">
    <text evidence="1">One of the components of the core complex of photosystem II (PSII). PSII is a light-driven water:plastoquinone oxidoreductase that uses light energy to abstract electrons from H(2)O, generating O(2) and a proton gradient subsequently used for ATP formation. It consists of a core antenna complex that captures photons, and an electron transfer chain that converts photonic excitation into a charge separation.</text>
</comment>
<comment type="subunit">
    <text evidence="1">PSII is composed of 1 copy each of membrane proteins PsbA, PsbB, PsbC, PsbD, PsbE, PsbF, PsbH, PsbI, PsbJ, PsbK, PsbL, PsbM, PsbT, PsbX, PsbY, PsbZ, Psb30/Ycf12, at least 3 peripheral proteins of the oxygen-evolving complex and a large number of cofactors. It forms dimeric complexes.</text>
</comment>
<comment type="subcellular location">
    <subcellularLocation>
        <location evidence="1">Plastid</location>
        <location evidence="1">Chloroplast thylakoid membrane</location>
        <topology evidence="1">Single-pass membrane protein</topology>
    </subcellularLocation>
</comment>
<comment type="similarity">
    <text evidence="1">Belongs to the PsbJ family.</text>
</comment>
<gene>
    <name evidence="1" type="primary">psbJ</name>
</gene>
<proteinExistence type="inferred from homology"/>
<accession>A4QLC0</accession>
<geneLocation type="chloroplast"/>
<reference key="1">
    <citation type="submission" date="2007-03" db="EMBL/GenBank/DDBJ databases">
        <title>Sequencing analysis of Lepidium virginicum JO26 chloroplast DNA.</title>
        <authorList>
            <person name="Hosouchi T."/>
            <person name="Tsuruoka H."/>
            <person name="Kotani H."/>
        </authorList>
    </citation>
    <scope>NUCLEOTIDE SEQUENCE [LARGE SCALE GENOMIC DNA]</scope>
</reference>
<sequence length="40" mass="4117">MADTTGRIPLWVIGTVAGILVIGLIGIFFYGSYSGLGSSL</sequence>
<dbReference type="EMBL" id="AP009374">
    <property type="protein sequence ID" value="BAF50475.1"/>
    <property type="molecule type" value="Genomic_DNA"/>
</dbReference>
<dbReference type="RefSeq" id="YP_001123651.1">
    <property type="nucleotide sequence ID" value="NC_009273.1"/>
</dbReference>
<dbReference type="SMR" id="A4QLC0"/>
<dbReference type="GeneID" id="4961981"/>
<dbReference type="GO" id="GO:0009535">
    <property type="term" value="C:chloroplast thylakoid membrane"/>
    <property type="evidence" value="ECO:0007669"/>
    <property type="project" value="UniProtKB-SubCell"/>
</dbReference>
<dbReference type="GO" id="GO:0009539">
    <property type="term" value="C:photosystem II reaction center"/>
    <property type="evidence" value="ECO:0007669"/>
    <property type="project" value="InterPro"/>
</dbReference>
<dbReference type="GO" id="GO:0015979">
    <property type="term" value="P:photosynthesis"/>
    <property type="evidence" value="ECO:0007669"/>
    <property type="project" value="UniProtKB-UniRule"/>
</dbReference>
<dbReference type="Gene3D" id="6.10.250.2070">
    <property type="match status" value="1"/>
</dbReference>
<dbReference type="HAMAP" id="MF_01305">
    <property type="entry name" value="PSII_PsbJ"/>
    <property type="match status" value="1"/>
</dbReference>
<dbReference type="InterPro" id="IPR002682">
    <property type="entry name" value="PSII_PsbJ"/>
</dbReference>
<dbReference type="InterPro" id="IPR037267">
    <property type="entry name" value="PSII_PsbJ_sf"/>
</dbReference>
<dbReference type="NCBIfam" id="NF002722">
    <property type="entry name" value="PRK02565.1"/>
    <property type="match status" value="1"/>
</dbReference>
<dbReference type="PANTHER" id="PTHR34812">
    <property type="entry name" value="PHOTOSYSTEM II REACTION CENTER PROTEIN J"/>
    <property type="match status" value="1"/>
</dbReference>
<dbReference type="PANTHER" id="PTHR34812:SF3">
    <property type="entry name" value="PHOTOSYSTEM II REACTION CENTER PROTEIN J"/>
    <property type="match status" value="1"/>
</dbReference>
<dbReference type="Pfam" id="PF01788">
    <property type="entry name" value="PsbJ"/>
    <property type="match status" value="1"/>
</dbReference>
<dbReference type="SUPFAM" id="SSF161021">
    <property type="entry name" value="Photosystem II reaction center protein J, PsbJ"/>
    <property type="match status" value="1"/>
</dbReference>
<feature type="chain" id="PRO_0000292253" description="Photosystem II reaction center protein J">
    <location>
        <begin position="1"/>
        <end position="40"/>
    </location>
</feature>
<feature type="transmembrane region" description="Helical" evidence="1">
    <location>
        <begin position="8"/>
        <end position="28"/>
    </location>
</feature>
<protein>
    <recommendedName>
        <fullName evidence="1">Photosystem II reaction center protein J</fullName>
        <shortName evidence="1">PSII-J</shortName>
    </recommendedName>
</protein>
<evidence type="ECO:0000255" key="1">
    <source>
        <dbReference type="HAMAP-Rule" id="MF_01305"/>
    </source>
</evidence>
<organism>
    <name type="scientific">Lepidium virginicum</name>
    <name type="common">Virginia pepperweed</name>
    <dbReference type="NCBI Taxonomy" id="59292"/>
    <lineage>
        <taxon>Eukaryota</taxon>
        <taxon>Viridiplantae</taxon>
        <taxon>Streptophyta</taxon>
        <taxon>Embryophyta</taxon>
        <taxon>Tracheophyta</taxon>
        <taxon>Spermatophyta</taxon>
        <taxon>Magnoliopsida</taxon>
        <taxon>eudicotyledons</taxon>
        <taxon>Gunneridae</taxon>
        <taxon>Pentapetalae</taxon>
        <taxon>rosids</taxon>
        <taxon>malvids</taxon>
        <taxon>Brassicales</taxon>
        <taxon>Brassicaceae</taxon>
        <taxon>Lepidieae</taxon>
        <taxon>Lepidium</taxon>
    </lineage>
</organism>